<sequence>MPFSCFVFSQFLRFLRPEFFLGDVSPQGSLISREFSLGPTASLAVLWDERFLDGFLSSARLCLLLDDARRLGRTSRREKSFVLSSRGDESVRSPQGRQVHSPGFAPAVDNETASVASHISRAPRVSSKLHCSCTLRPVFFSALSRLSDFVVSSLLLCVSCSFASSALRSLPRVFSSRLSRAMPRSKKRGGAAKPPSAFSSLVSEMKEIPSPRSRSPSDPDSSSRPCASFLRSCEESLREEAATAATTVPQLSAASSSCCSRSNSSSMQTAEGRVVASPDLAEEEGVSPSRRVHSSQKRGNAGVHERRAEATCCAPRDRHGGDRPASSASFLTCDGSSRELRMQSLLPDATGGRPVAAAAHLAPCCRVPPSDASTPRSRLGQEGLERELASFPEVDEHWPHRLAETHSACSRGHRNPRAVQRHSVGDCGLRGGDTRGCCSGAEKARRESCCEADRTTEAGEGRETGTQRARRKLVMASMVCCVFMFVEIVAGVLANSLALMTDASHLLSDLCAFLISLFALWVSELKGNPSMSFGYHRAEILGALLSVFLIWVLTAVLIYAACFRLVDPPQVDGELMFWTALLGTLANLFMTHILKVHSHGIGQVHAHSCCGEETFEPLRNLQASSSSPEKPEESPASRASQAGRLAWDPEVSPSGRDAEAGRDAEAGRDAEAGRDAETGRGGEVGRGGEVGRDEKPRRPFSASSAGSTAASGDIYVRLEEDMDSERNYENMNLRAAYIHALGDLLQNIGVMIASALIWWRPDWAIADPICTFIFSIFVLFTTLSILKEALNVLMEGTPVGIDARALQEDLLLLPGVVEVHDLHVWSLSVGKPSLACHVVVENEDVARSVLRKATVLCQRKYAILHTTIQTDFSSDKRTCETEAHQKCSDPMKVFRR</sequence>
<comment type="function">
    <text evidence="3">Vacuolar zinc transporter that is probably involved in the transfer of zinc ions from the cytosol to the vacuole for intracellular storage (PubMed:31118298). Plays an essential role in extracellular zinc tolerance (PubMed:31118298).</text>
</comment>
<comment type="subcellular location">
    <subcellularLocation>
        <location evidence="3">Vacuole membrane</location>
        <topology evidence="1">Multi-pass membrane protein</topology>
    </subcellularLocation>
    <subcellularLocation>
        <location evidence="3">Cytoplasmic vesicle membrane</location>
        <topology evidence="1">Multi-pass membrane protein</topology>
    </subcellularLocation>
    <text evidence="3">In extracellular tachyzoites, localizes to vacuoles (PubMed:31118298). In intracellular tachyzoites, localizes to dispersed vesicles throughout the cytoplasm (PubMed:31118298).</text>
</comment>
<comment type="disruption phenotype">
    <text evidence="3">Conditional knockdown results in reduced growth rates in the presence of extracellular Zn(2+).</text>
</comment>
<comment type="similarity">
    <text evidence="6">Belongs to the cation diffusion facilitator (CDF) transporter (TC 2.A.4) family. SLC30A subfamily.</text>
</comment>
<comment type="caution">
    <text evidence="3">Experimental evidence suggests that the expressed protein may be 715 amino acids long with Met-182 as the first amino acid.</text>
</comment>
<name>ZNT_TOXGG</name>
<keyword id="KW-0968">Cytoplasmic vesicle</keyword>
<keyword id="KW-0406">Ion transport</keyword>
<keyword id="KW-0472">Membrane</keyword>
<keyword id="KW-0812">Transmembrane</keyword>
<keyword id="KW-1133">Transmembrane helix</keyword>
<keyword id="KW-0813">Transport</keyword>
<keyword id="KW-0926">Vacuole</keyword>
<keyword id="KW-0862">Zinc</keyword>
<keyword id="KW-0864">Zinc transport</keyword>
<accession>S7V0D3</accession>
<gene>
    <name evidence="7" type="ORF">TGGT1_251630</name>
</gene>
<proteinExistence type="inferred from homology"/>
<organism evidence="8">
    <name type="scientific">Toxoplasma gondii (strain ATCC 50853 / GT1)</name>
    <dbReference type="NCBI Taxonomy" id="507601"/>
    <lineage>
        <taxon>Eukaryota</taxon>
        <taxon>Sar</taxon>
        <taxon>Alveolata</taxon>
        <taxon>Apicomplexa</taxon>
        <taxon>Conoidasida</taxon>
        <taxon>Coccidia</taxon>
        <taxon>Eucoccidiorida</taxon>
        <taxon>Eimeriorina</taxon>
        <taxon>Sarcocystidae</taxon>
        <taxon>Toxoplasma</taxon>
    </lineage>
</organism>
<feature type="chain" id="PRO_0000460277" description="Vacuolar zinc transporter TgZnT">
    <location>
        <begin position="1"/>
        <end position="896"/>
    </location>
</feature>
<feature type="topological domain" description="Cytoplasmic" evidence="6">
    <location>
        <begin position="1"/>
        <end position="472"/>
    </location>
</feature>
<feature type="transmembrane region" description="Helical" evidence="1">
    <location>
        <begin position="473"/>
        <end position="493"/>
    </location>
</feature>
<feature type="topological domain" description="Vacuolar" evidence="6">
    <location>
        <begin position="494"/>
        <end position="502"/>
    </location>
</feature>
<feature type="transmembrane region" description="Helical" evidence="1">
    <location>
        <begin position="503"/>
        <end position="523"/>
    </location>
</feature>
<feature type="topological domain" description="Cytoplasmic" evidence="6">
    <location>
        <begin position="524"/>
        <end position="539"/>
    </location>
</feature>
<feature type="transmembrane region" description="Helical" evidence="1">
    <location>
        <begin position="540"/>
        <end position="560"/>
    </location>
</feature>
<feature type="topological domain" description="Vacuolar" evidence="6">
    <location>
        <begin position="561"/>
        <end position="573"/>
    </location>
</feature>
<feature type="transmembrane region" description="Helical" evidence="1">
    <location>
        <begin position="574"/>
        <end position="594"/>
    </location>
</feature>
<feature type="topological domain" description="Cytoplasmic" evidence="6">
    <location>
        <begin position="595"/>
        <end position="737"/>
    </location>
</feature>
<feature type="transmembrane region" description="Helical" evidence="1">
    <location>
        <begin position="738"/>
        <end position="758"/>
    </location>
</feature>
<feature type="topological domain" description="Vacuolar" evidence="6">
    <location>
        <begin position="759"/>
        <end position="762"/>
    </location>
</feature>
<feature type="transmembrane region" description="Helical" evidence="1">
    <location>
        <begin position="763"/>
        <end position="783"/>
    </location>
</feature>
<feature type="topological domain" description="Cytoplasmic" evidence="6">
    <location>
        <begin position="784"/>
        <end position="896"/>
    </location>
</feature>
<feature type="region of interest" description="Disordered" evidence="2">
    <location>
        <begin position="82"/>
        <end position="104"/>
    </location>
</feature>
<feature type="region of interest" description="Disordered" evidence="2">
    <location>
        <begin position="205"/>
        <end position="227"/>
    </location>
</feature>
<feature type="region of interest" description="Disordered" evidence="2">
    <location>
        <begin position="255"/>
        <end position="329"/>
    </location>
</feature>
<feature type="region of interest" description="Disordered" evidence="2">
    <location>
        <begin position="621"/>
        <end position="707"/>
    </location>
</feature>
<feature type="compositionally biased region" description="Basic and acidic residues" evidence="2">
    <location>
        <begin position="82"/>
        <end position="91"/>
    </location>
</feature>
<feature type="compositionally biased region" description="Low complexity" evidence="2">
    <location>
        <begin position="210"/>
        <end position="225"/>
    </location>
</feature>
<feature type="compositionally biased region" description="Low complexity" evidence="2">
    <location>
        <begin position="255"/>
        <end position="266"/>
    </location>
</feature>
<feature type="compositionally biased region" description="Basic and acidic residues" evidence="2">
    <location>
        <begin position="303"/>
        <end position="322"/>
    </location>
</feature>
<feature type="compositionally biased region" description="Basic and acidic residues" evidence="2">
    <location>
        <begin position="656"/>
        <end position="680"/>
    </location>
</feature>
<dbReference type="EMBL" id="AAQM03000062">
    <property type="protein sequence ID" value="EPR63277.1"/>
    <property type="molecule type" value="Genomic_DNA"/>
</dbReference>
<dbReference type="SMR" id="S7V0D3"/>
<dbReference type="EnsemblProtists" id="EPR63277">
    <property type="protein sequence ID" value="EPR63277"/>
    <property type="gene ID" value="TGGT1_251630"/>
</dbReference>
<dbReference type="VEuPathDB" id="ToxoDB:TGGT1_251630"/>
<dbReference type="OrthoDB" id="4838at5809"/>
<dbReference type="Proteomes" id="UP000005641">
    <property type="component" value="Unassembled WGS sequence"/>
</dbReference>
<dbReference type="GO" id="GO:0030659">
    <property type="term" value="C:cytoplasmic vesicle membrane"/>
    <property type="evidence" value="ECO:0007669"/>
    <property type="project" value="UniProtKB-SubCell"/>
</dbReference>
<dbReference type="GO" id="GO:0005886">
    <property type="term" value="C:plasma membrane"/>
    <property type="evidence" value="ECO:0007669"/>
    <property type="project" value="TreeGrafter"/>
</dbReference>
<dbReference type="GO" id="GO:0005774">
    <property type="term" value="C:vacuolar membrane"/>
    <property type="evidence" value="ECO:0007669"/>
    <property type="project" value="UniProtKB-SubCell"/>
</dbReference>
<dbReference type="GO" id="GO:0005385">
    <property type="term" value="F:zinc ion transmembrane transporter activity"/>
    <property type="evidence" value="ECO:0007669"/>
    <property type="project" value="TreeGrafter"/>
</dbReference>
<dbReference type="Gene3D" id="1.20.1510.10">
    <property type="entry name" value="Cation efflux protein transmembrane domain"/>
    <property type="match status" value="2"/>
</dbReference>
<dbReference type="InterPro" id="IPR002524">
    <property type="entry name" value="Cation_efflux"/>
</dbReference>
<dbReference type="InterPro" id="IPR027469">
    <property type="entry name" value="Cation_efflux_TMD_sf"/>
</dbReference>
<dbReference type="InterPro" id="IPR050681">
    <property type="entry name" value="CDF/SLC30A"/>
</dbReference>
<dbReference type="NCBIfam" id="TIGR01297">
    <property type="entry name" value="CDF"/>
    <property type="match status" value="1"/>
</dbReference>
<dbReference type="PANTHER" id="PTHR11562">
    <property type="entry name" value="CATION EFFLUX PROTEIN/ ZINC TRANSPORTER"/>
    <property type="match status" value="1"/>
</dbReference>
<dbReference type="PANTHER" id="PTHR11562:SF17">
    <property type="entry name" value="RE54080P-RELATED"/>
    <property type="match status" value="1"/>
</dbReference>
<dbReference type="Pfam" id="PF01545">
    <property type="entry name" value="Cation_efflux"/>
    <property type="match status" value="1"/>
</dbReference>
<dbReference type="SUPFAM" id="SSF161111">
    <property type="entry name" value="Cation efflux protein transmembrane domain-like"/>
    <property type="match status" value="1"/>
</dbReference>
<evidence type="ECO:0000255" key="1"/>
<evidence type="ECO:0000256" key="2">
    <source>
        <dbReference type="SAM" id="MobiDB-lite"/>
    </source>
</evidence>
<evidence type="ECO:0000269" key="3">
    <source>
    </source>
</evidence>
<evidence type="ECO:0000303" key="4">
    <source>
    </source>
</evidence>
<evidence type="ECO:0000303" key="5">
    <source ref="1"/>
</evidence>
<evidence type="ECO:0000305" key="6"/>
<evidence type="ECO:0000312" key="7">
    <source>
        <dbReference type="EMBL" id="EPR63277.1"/>
    </source>
</evidence>
<evidence type="ECO:0000312" key="8">
    <source>
        <dbReference type="Proteomes" id="UP000005641"/>
    </source>
</evidence>
<protein>
    <recommendedName>
        <fullName evidence="4">Vacuolar zinc transporter TgZnT</fullName>
        <shortName evidence="5">TgZnT</shortName>
    </recommendedName>
    <alternativeName>
        <fullName evidence="7">Slc30a2 protein</fullName>
    </alternativeName>
</protein>
<reference evidence="8" key="1">
    <citation type="submission" date="2006-05" db="EMBL/GenBank/DDBJ databases">
        <authorList>
            <person name="Paulsen I."/>
        </authorList>
    </citation>
    <scope>NUCLEOTIDE SEQUENCE [LARGE SCALE GENOMIC DNA]</scope>
    <source>
        <strain evidence="8">ATCC 50853 / GT1</strain>
    </source>
</reference>
<reference evidence="8" key="2">
    <citation type="submission" date="2013-05" db="EMBL/GenBank/DDBJ databases">
        <authorList>
            <person name="Sibley D."/>
            <person name="Venepally P."/>
            <person name="Karamycheva S."/>
            <person name="Hadjithomas M."/>
            <person name="Khan A."/>
            <person name="Brunk B."/>
            <person name="Roos D."/>
            <person name="Caler E."/>
            <person name="Lorenzi H."/>
        </authorList>
    </citation>
    <scope>NUCLEOTIDE SEQUENCE [LARGE SCALE GENOMIC DNA]</scope>
    <source>
        <strain evidence="8">ATCC 50853 / GT1</strain>
    </source>
</reference>
<reference evidence="6" key="3">
    <citation type="journal article" date="2019" name="MSphere">
        <title>The Vacuolar Zinc Transporter TgZnT Protects Toxoplasma gondii from Zinc Toxicity.</title>
        <authorList>
            <person name="Chasen N.M."/>
            <person name="Stasic A.J."/>
            <person name="Asady B."/>
            <person name="Coppens I."/>
            <person name="Moreno S.N.J."/>
        </authorList>
    </citation>
    <scope>FUNCTION</scope>
    <scope>SUBCELLULAR LOCATION</scope>
    <scope>DISRUPTION PHENOTYPE</scope>
</reference>